<proteinExistence type="inferred from homology"/>
<accession>Q3AUJ5</accession>
<feature type="chain" id="PRO_0000258229" description="Large ribosomal subunit protein uL11">
    <location>
        <begin position="1"/>
        <end position="141"/>
    </location>
</feature>
<organism>
    <name type="scientific">Synechococcus sp. (strain CC9902)</name>
    <dbReference type="NCBI Taxonomy" id="316279"/>
    <lineage>
        <taxon>Bacteria</taxon>
        <taxon>Bacillati</taxon>
        <taxon>Cyanobacteriota</taxon>
        <taxon>Cyanophyceae</taxon>
        <taxon>Synechococcales</taxon>
        <taxon>Synechococcaceae</taxon>
        <taxon>Synechococcus</taxon>
    </lineage>
</organism>
<gene>
    <name evidence="1" type="primary">rplK</name>
    <name evidence="1" type="synonym">rpl11</name>
    <name type="ordered locus">Syncc9902_2156</name>
</gene>
<dbReference type="EMBL" id="CP000097">
    <property type="protein sequence ID" value="ABB27114.1"/>
    <property type="molecule type" value="Genomic_DNA"/>
</dbReference>
<dbReference type="RefSeq" id="WP_009788713.1">
    <property type="nucleotide sequence ID" value="NC_007513.1"/>
</dbReference>
<dbReference type="SMR" id="Q3AUJ5"/>
<dbReference type="STRING" id="316279.Syncc9902_2156"/>
<dbReference type="KEGG" id="sye:Syncc9902_2156"/>
<dbReference type="eggNOG" id="COG0080">
    <property type="taxonomic scope" value="Bacteria"/>
</dbReference>
<dbReference type="HOGENOM" id="CLU_074237_2_2_3"/>
<dbReference type="OrthoDB" id="9802408at2"/>
<dbReference type="Proteomes" id="UP000002712">
    <property type="component" value="Chromosome"/>
</dbReference>
<dbReference type="GO" id="GO:0022625">
    <property type="term" value="C:cytosolic large ribosomal subunit"/>
    <property type="evidence" value="ECO:0007669"/>
    <property type="project" value="TreeGrafter"/>
</dbReference>
<dbReference type="GO" id="GO:0070180">
    <property type="term" value="F:large ribosomal subunit rRNA binding"/>
    <property type="evidence" value="ECO:0007669"/>
    <property type="project" value="UniProtKB-UniRule"/>
</dbReference>
<dbReference type="GO" id="GO:0003735">
    <property type="term" value="F:structural constituent of ribosome"/>
    <property type="evidence" value="ECO:0007669"/>
    <property type="project" value="InterPro"/>
</dbReference>
<dbReference type="GO" id="GO:0006412">
    <property type="term" value="P:translation"/>
    <property type="evidence" value="ECO:0007669"/>
    <property type="project" value="UniProtKB-UniRule"/>
</dbReference>
<dbReference type="CDD" id="cd00349">
    <property type="entry name" value="Ribosomal_L11"/>
    <property type="match status" value="1"/>
</dbReference>
<dbReference type="FunFam" id="1.10.10.250:FF:000001">
    <property type="entry name" value="50S ribosomal protein L11"/>
    <property type="match status" value="1"/>
</dbReference>
<dbReference type="FunFam" id="3.30.1550.10:FF:000001">
    <property type="entry name" value="50S ribosomal protein L11"/>
    <property type="match status" value="1"/>
</dbReference>
<dbReference type="Gene3D" id="1.10.10.250">
    <property type="entry name" value="Ribosomal protein L11, C-terminal domain"/>
    <property type="match status" value="1"/>
</dbReference>
<dbReference type="Gene3D" id="3.30.1550.10">
    <property type="entry name" value="Ribosomal protein L11/L12, N-terminal domain"/>
    <property type="match status" value="1"/>
</dbReference>
<dbReference type="HAMAP" id="MF_00736">
    <property type="entry name" value="Ribosomal_uL11"/>
    <property type="match status" value="1"/>
</dbReference>
<dbReference type="InterPro" id="IPR000911">
    <property type="entry name" value="Ribosomal_uL11"/>
</dbReference>
<dbReference type="InterPro" id="IPR006519">
    <property type="entry name" value="Ribosomal_uL11_bac-typ"/>
</dbReference>
<dbReference type="InterPro" id="IPR020783">
    <property type="entry name" value="Ribosomal_uL11_C"/>
</dbReference>
<dbReference type="InterPro" id="IPR036769">
    <property type="entry name" value="Ribosomal_uL11_C_sf"/>
</dbReference>
<dbReference type="InterPro" id="IPR020785">
    <property type="entry name" value="Ribosomal_uL11_CS"/>
</dbReference>
<dbReference type="InterPro" id="IPR020784">
    <property type="entry name" value="Ribosomal_uL11_N"/>
</dbReference>
<dbReference type="InterPro" id="IPR036796">
    <property type="entry name" value="Ribosomal_uL11_N_sf"/>
</dbReference>
<dbReference type="NCBIfam" id="TIGR01632">
    <property type="entry name" value="L11_bact"/>
    <property type="match status" value="1"/>
</dbReference>
<dbReference type="PANTHER" id="PTHR11661">
    <property type="entry name" value="60S RIBOSOMAL PROTEIN L12"/>
    <property type="match status" value="1"/>
</dbReference>
<dbReference type="PANTHER" id="PTHR11661:SF1">
    <property type="entry name" value="LARGE RIBOSOMAL SUBUNIT PROTEIN UL11M"/>
    <property type="match status" value="1"/>
</dbReference>
<dbReference type="Pfam" id="PF00298">
    <property type="entry name" value="Ribosomal_L11"/>
    <property type="match status" value="1"/>
</dbReference>
<dbReference type="Pfam" id="PF03946">
    <property type="entry name" value="Ribosomal_L11_N"/>
    <property type="match status" value="1"/>
</dbReference>
<dbReference type="SMART" id="SM00649">
    <property type="entry name" value="RL11"/>
    <property type="match status" value="1"/>
</dbReference>
<dbReference type="SUPFAM" id="SSF54747">
    <property type="entry name" value="Ribosomal L11/L12e N-terminal domain"/>
    <property type="match status" value="1"/>
</dbReference>
<dbReference type="SUPFAM" id="SSF46906">
    <property type="entry name" value="Ribosomal protein L11, C-terminal domain"/>
    <property type="match status" value="1"/>
</dbReference>
<dbReference type="PROSITE" id="PS00359">
    <property type="entry name" value="RIBOSOMAL_L11"/>
    <property type="match status" value="1"/>
</dbReference>
<comment type="function">
    <text evidence="1">Forms part of the ribosomal stalk which helps the ribosome interact with GTP-bound translation factors.</text>
</comment>
<comment type="subunit">
    <text evidence="1">Part of the ribosomal stalk of the 50S ribosomal subunit. Interacts with L10 and the large rRNA to form the base of the stalk. L10 forms an elongated spine to which L12 dimers bind in a sequential fashion forming a multimeric L10(L12)X complex.</text>
</comment>
<comment type="PTM">
    <text evidence="1">One or more lysine residues are methylated.</text>
</comment>
<comment type="similarity">
    <text evidence="1">Belongs to the universal ribosomal protein uL11 family.</text>
</comment>
<protein>
    <recommendedName>
        <fullName evidence="1">Large ribosomal subunit protein uL11</fullName>
    </recommendedName>
    <alternativeName>
        <fullName evidence="2">50S ribosomal protein L11</fullName>
    </alternativeName>
</protein>
<keyword id="KW-0488">Methylation</keyword>
<keyword id="KW-1185">Reference proteome</keyword>
<keyword id="KW-0687">Ribonucleoprotein</keyword>
<keyword id="KW-0689">Ribosomal protein</keyword>
<keyword id="KW-0694">RNA-binding</keyword>
<keyword id="KW-0699">rRNA-binding</keyword>
<sequence length="141" mass="14698">MAKKVVAVIKLALQAGKANPAPPVGPALGQHGVNIMMFCKEYNARTQDKAGLVIPVEISVFEDRSFTFITKTPPASVLITKAAGIEKGSGDSAKGSVGSISRAQLEEIAKTKLPDLNCSSVDSAMRIIEGTARNMGVAVSD</sequence>
<name>RL11_SYNS9</name>
<reference key="1">
    <citation type="submission" date="2005-08" db="EMBL/GenBank/DDBJ databases">
        <title>Complete sequence of Synechococcus sp. CC9902.</title>
        <authorList>
            <person name="Copeland A."/>
            <person name="Lucas S."/>
            <person name="Lapidus A."/>
            <person name="Barry K."/>
            <person name="Detter J.C."/>
            <person name="Glavina T."/>
            <person name="Hammon N."/>
            <person name="Israni S."/>
            <person name="Pitluck S."/>
            <person name="Martinez M."/>
            <person name="Schmutz J."/>
            <person name="Larimer F."/>
            <person name="Land M."/>
            <person name="Kyrpides N."/>
            <person name="Ivanova N."/>
            <person name="Richardson P."/>
        </authorList>
    </citation>
    <scope>NUCLEOTIDE SEQUENCE [LARGE SCALE GENOMIC DNA]</scope>
    <source>
        <strain>CC9902</strain>
    </source>
</reference>
<evidence type="ECO:0000255" key="1">
    <source>
        <dbReference type="HAMAP-Rule" id="MF_00736"/>
    </source>
</evidence>
<evidence type="ECO:0000305" key="2"/>